<proteinExistence type="inferred from homology"/>
<sequence>MPVRAQRIQHVMQDTIINFYSTSDDYGDFSNFAARPIKVDGNTWPTSEHYFQAQKFLDEKYREEIRRVSSPMVAARMGRNRSKPLRKNWESVKEQVMRKALRAKFEQHAELRVLLLATAPAKLVEHTENDAYWGDGGNGKGKNRLGYLLMELREQLAIEK</sequence>
<protein>
    <recommendedName>
        <fullName>N-glycosidase YbiA</fullName>
        <ecNumber>3.2.2.-</ecNumber>
    </recommendedName>
    <alternativeName>
        <fullName>Riboflavin biosynthesis intermediates N-glycosidase</fullName>
    </alternativeName>
</protein>
<accession>Q83LU8</accession>
<accession>Q7C2G6</accession>
<reference key="1">
    <citation type="journal article" date="2002" name="Nucleic Acids Res.">
        <title>Genome sequence of Shigella flexneri 2a: insights into pathogenicity through comparison with genomes of Escherichia coli K12 and O157.</title>
        <authorList>
            <person name="Jin Q."/>
            <person name="Yuan Z."/>
            <person name="Xu J."/>
            <person name="Wang Y."/>
            <person name="Shen Y."/>
            <person name="Lu W."/>
            <person name="Wang J."/>
            <person name="Liu H."/>
            <person name="Yang J."/>
            <person name="Yang F."/>
            <person name="Zhang X."/>
            <person name="Zhang J."/>
            <person name="Yang G."/>
            <person name="Wu H."/>
            <person name="Qu D."/>
            <person name="Dong J."/>
            <person name="Sun L."/>
            <person name="Xue Y."/>
            <person name="Zhao A."/>
            <person name="Gao Y."/>
            <person name="Zhu J."/>
            <person name="Kan B."/>
            <person name="Ding K."/>
            <person name="Chen S."/>
            <person name="Cheng H."/>
            <person name="Yao Z."/>
            <person name="He B."/>
            <person name="Chen R."/>
            <person name="Ma D."/>
            <person name="Qiang B."/>
            <person name="Wen Y."/>
            <person name="Hou Y."/>
            <person name="Yu J."/>
        </authorList>
    </citation>
    <scope>NUCLEOTIDE SEQUENCE [LARGE SCALE GENOMIC DNA]</scope>
    <source>
        <strain>301 / Serotype 2a</strain>
    </source>
</reference>
<reference key="2">
    <citation type="journal article" date="2003" name="Infect. Immun.">
        <title>Complete genome sequence and comparative genomics of Shigella flexneri serotype 2a strain 2457T.</title>
        <authorList>
            <person name="Wei J."/>
            <person name="Goldberg M.B."/>
            <person name="Burland V."/>
            <person name="Venkatesan M.M."/>
            <person name="Deng W."/>
            <person name="Fournier G."/>
            <person name="Mayhew G.F."/>
            <person name="Plunkett G. III"/>
            <person name="Rose D.J."/>
            <person name="Darling A."/>
            <person name="Mau B."/>
            <person name="Perna N.T."/>
            <person name="Payne S.M."/>
            <person name="Runyen-Janecky L.J."/>
            <person name="Zhou S."/>
            <person name="Schwartz D.C."/>
            <person name="Blattner F.R."/>
        </authorList>
    </citation>
    <scope>NUCLEOTIDE SEQUENCE [LARGE SCALE GENOMIC DNA]</scope>
    <source>
        <strain>ATCC 700930 / 2457T / Serotype 2a</strain>
    </source>
</reference>
<organism>
    <name type="scientific">Shigella flexneri</name>
    <dbReference type="NCBI Taxonomy" id="623"/>
    <lineage>
        <taxon>Bacteria</taxon>
        <taxon>Pseudomonadati</taxon>
        <taxon>Pseudomonadota</taxon>
        <taxon>Gammaproteobacteria</taxon>
        <taxon>Enterobacterales</taxon>
        <taxon>Enterobacteriaceae</taxon>
        <taxon>Shigella</taxon>
    </lineage>
</organism>
<keyword id="KW-0326">Glycosidase</keyword>
<keyword id="KW-0378">Hydrolase</keyword>
<keyword id="KW-1185">Reference proteome</keyword>
<evidence type="ECO:0000250" key="1">
    <source>
        <dbReference type="UniProtKB" id="P30176"/>
    </source>
</evidence>
<evidence type="ECO:0000305" key="2"/>
<gene>
    <name type="primary">ybiA</name>
    <name type="ordered locus">SF0749</name>
    <name type="ordered locus">S0789</name>
</gene>
<comment type="function">
    <text evidence="1">Catalyzes the hydrolysis of the N-glycosidic bond in the first two intermediates of riboflavin biosynthesis, which are highly reactive metabolites, yielding relatively innocuous products. Thus, can divert a surplus of harmful intermediates into relatively harmless products and pre-empt the damage these intermediates would otherwise do. Helps maintain flavin levels. May act on other substrates in vivo. Has no activity against GTP, nucleoside monophosphates or ADP-ribose. Is Required for swarming motility.</text>
</comment>
<comment type="catalytic activity">
    <reaction evidence="1">
        <text>2,5-diamino-6-hydroxy-4-(5-phosphoribosylamino)-pyrimidine + H2O = 2,5,6-triamino-4-hydroxypyrimidine + D-ribose 5-phosphate</text>
        <dbReference type="Rhea" id="RHEA:23436"/>
        <dbReference type="ChEBI" id="CHEBI:15377"/>
        <dbReference type="ChEBI" id="CHEBI:58614"/>
        <dbReference type="ChEBI" id="CHEBI:78346"/>
        <dbReference type="ChEBI" id="CHEBI:137796"/>
    </reaction>
</comment>
<comment type="catalytic activity">
    <reaction evidence="1">
        <text>5-amino-6-(5-phospho-D-ribosylamino)uracil + H2O = 5,6-diaminouracil + D-ribose 5-phosphate</text>
        <dbReference type="Rhea" id="RHEA:55020"/>
        <dbReference type="ChEBI" id="CHEBI:15377"/>
        <dbReference type="ChEBI" id="CHEBI:46252"/>
        <dbReference type="ChEBI" id="CHEBI:58453"/>
        <dbReference type="ChEBI" id="CHEBI:78346"/>
    </reaction>
</comment>
<comment type="similarity">
    <text evidence="2">Belongs to the YbiA family.</text>
</comment>
<name>RIBX_SHIFL</name>
<feature type="chain" id="PRO_0000287339" description="N-glycosidase YbiA">
    <location>
        <begin position="1"/>
        <end position="160"/>
    </location>
</feature>
<dbReference type="EC" id="3.2.2.-"/>
<dbReference type="EMBL" id="AE005674">
    <property type="protein sequence ID" value="AAN42383.1"/>
    <property type="molecule type" value="Genomic_DNA"/>
</dbReference>
<dbReference type="EMBL" id="AE014073">
    <property type="protein sequence ID" value="AAP16260.1"/>
    <property type="molecule type" value="Genomic_DNA"/>
</dbReference>
<dbReference type="RefSeq" id="NP_706676.1">
    <property type="nucleotide sequence ID" value="NC_004337.2"/>
</dbReference>
<dbReference type="RefSeq" id="WP_001145124.1">
    <property type="nucleotide sequence ID" value="NZ_WPGW01000030.1"/>
</dbReference>
<dbReference type="SMR" id="Q83LU8"/>
<dbReference type="STRING" id="198214.SF0749"/>
<dbReference type="PaxDb" id="198214-SF0749"/>
<dbReference type="GeneID" id="1023696"/>
<dbReference type="KEGG" id="sfl:SF0749"/>
<dbReference type="KEGG" id="sfx:S0789"/>
<dbReference type="PATRIC" id="fig|198214.7.peg.869"/>
<dbReference type="HOGENOM" id="CLU_084247_3_1_6"/>
<dbReference type="Proteomes" id="UP000001006">
    <property type="component" value="Chromosome"/>
</dbReference>
<dbReference type="Proteomes" id="UP000002673">
    <property type="component" value="Chromosome"/>
</dbReference>
<dbReference type="GO" id="GO:0016798">
    <property type="term" value="F:hydrolase activity, acting on glycosyl bonds"/>
    <property type="evidence" value="ECO:0007669"/>
    <property type="project" value="UniProtKB-KW"/>
</dbReference>
<dbReference type="CDD" id="cd15457">
    <property type="entry name" value="NADAR"/>
    <property type="match status" value="1"/>
</dbReference>
<dbReference type="FunFam" id="1.10.357.40:FF:000001">
    <property type="entry name" value="Swarming motility protein ybiA"/>
    <property type="match status" value="1"/>
</dbReference>
<dbReference type="Gene3D" id="1.10.357.40">
    <property type="entry name" value="YbiA-like"/>
    <property type="match status" value="1"/>
</dbReference>
<dbReference type="InterPro" id="IPR012816">
    <property type="entry name" value="NADAR"/>
</dbReference>
<dbReference type="InterPro" id="IPR037238">
    <property type="entry name" value="YbiA-like_sf"/>
</dbReference>
<dbReference type="NCBIfam" id="TIGR02464">
    <property type="entry name" value="ribofla_fusion"/>
    <property type="match status" value="1"/>
</dbReference>
<dbReference type="Pfam" id="PF08719">
    <property type="entry name" value="NADAR"/>
    <property type="match status" value="1"/>
</dbReference>
<dbReference type="SUPFAM" id="SSF143990">
    <property type="entry name" value="YbiA-like"/>
    <property type="match status" value="1"/>
</dbReference>